<comment type="function">
    <text evidence="1">Catalyzes the catabolism of the allantoin degradation intermediate (S)-ureidoglycolate, generating urea and glyoxylate. Involved in the utilization of allantoin as nitrogen source.</text>
</comment>
<comment type="catalytic activity">
    <reaction evidence="1">
        <text>(S)-ureidoglycolate = urea + glyoxylate</text>
        <dbReference type="Rhea" id="RHEA:11304"/>
        <dbReference type="ChEBI" id="CHEBI:16199"/>
        <dbReference type="ChEBI" id="CHEBI:36655"/>
        <dbReference type="ChEBI" id="CHEBI:57296"/>
        <dbReference type="EC" id="4.3.2.3"/>
    </reaction>
</comment>
<comment type="cofactor">
    <cofactor evidence="1">
        <name>Ni(2+)</name>
        <dbReference type="ChEBI" id="CHEBI:49786"/>
    </cofactor>
</comment>
<comment type="pathway">
    <text evidence="1">Nitrogen metabolism; (S)-allantoin degradation.</text>
</comment>
<comment type="subunit">
    <text evidence="1">Homodimer.</text>
</comment>
<comment type="similarity">
    <text evidence="1">Belongs to the ureidoglycolate lyase family.</text>
</comment>
<gene>
    <name evidence="1" type="primary">allA</name>
    <name type="ordered locus">BMEI1430</name>
</gene>
<organism>
    <name type="scientific">Brucella melitensis biotype 1 (strain ATCC 23456 / CCUG 17765 / NCTC 10094 / 16M)</name>
    <dbReference type="NCBI Taxonomy" id="224914"/>
    <lineage>
        <taxon>Bacteria</taxon>
        <taxon>Pseudomonadati</taxon>
        <taxon>Pseudomonadota</taxon>
        <taxon>Alphaproteobacteria</taxon>
        <taxon>Hyphomicrobiales</taxon>
        <taxon>Brucellaceae</taxon>
        <taxon>Brucella/Ochrobactrum group</taxon>
        <taxon>Brucella</taxon>
    </lineage>
</organism>
<proteinExistence type="inferred from homology"/>
<protein>
    <recommendedName>
        <fullName evidence="1">Ureidoglycolate lyase</fullName>
        <ecNumber evidence="1">4.3.2.3</ecNumber>
    </recommendedName>
    <alternativeName>
        <fullName evidence="1">Ureidoglycolatase</fullName>
    </alternativeName>
</protein>
<feature type="chain" id="PRO_0000120544" description="Ureidoglycolate lyase">
    <location>
        <begin position="1"/>
        <end position="169"/>
    </location>
</feature>
<evidence type="ECO:0000255" key="1">
    <source>
        <dbReference type="HAMAP-Rule" id="MF_00616"/>
    </source>
</evidence>
<accession>Q8YFU0</accession>
<name>ALLA_BRUME</name>
<dbReference type="EC" id="4.3.2.3" evidence="1"/>
<dbReference type="EMBL" id="AE008917">
    <property type="protein sequence ID" value="AAL52611.1"/>
    <property type="molecule type" value="Genomic_DNA"/>
</dbReference>
<dbReference type="PIR" id="AH3430">
    <property type="entry name" value="AH3430"/>
</dbReference>
<dbReference type="RefSeq" id="WP_004683193.1">
    <property type="nucleotide sequence ID" value="NZ_GG703778.1"/>
</dbReference>
<dbReference type="SMR" id="Q8YFU0"/>
<dbReference type="GeneID" id="29594287"/>
<dbReference type="KEGG" id="bme:BMEI1430"/>
<dbReference type="KEGG" id="bmel:DK63_2058"/>
<dbReference type="PATRIC" id="fig|224914.52.peg.2160"/>
<dbReference type="eggNOG" id="COG3194">
    <property type="taxonomic scope" value="Bacteria"/>
</dbReference>
<dbReference type="PhylomeDB" id="Q8YFU0"/>
<dbReference type="UniPathway" id="UPA00395"/>
<dbReference type="Proteomes" id="UP000000419">
    <property type="component" value="Chromosome I"/>
</dbReference>
<dbReference type="GO" id="GO:0004848">
    <property type="term" value="F:ureidoglycolate hydrolase activity"/>
    <property type="evidence" value="ECO:0007669"/>
    <property type="project" value="InterPro"/>
</dbReference>
<dbReference type="GO" id="GO:0050385">
    <property type="term" value="F:ureidoglycolate lyase activity"/>
    <property type="evidence" value="ECO:0007669"/>
    <property type="project" value="UniProtKB-UniRule"/>
</dbReference>
<dbReference type="GO" id="GO:0000256">
    <property type="term" value="P:allantoin catabolic process"/>
    <property type="evidence" value="ECO:0007669"/>
    <property type="project" value="UniProtKB-UniRule"/>
</dbReference>
<dbReference type="GO" id="GO:0006145">
    <property type="term" value="P:purine nucleobase catabolic process"/>
    <property type="evidence" value="ECO:0007669"/>
    <property type="project" value="UniProtKB-UniRule"/>
</dbReference>
<dbReference type="CDD" id="cd20298">
    <property type="entry name" value="cupin_UAH"/>
    <property type="match status" value="1"/>
</dbReference>
<dbReference type="Gene3D" id="2.60.120.480">
    <property type="entry name" value="Ureidoglycolate hydrolase"/>
    <property type="match status" value="1"/>
</dbReference>
<dbReference type="HAMAP" id="MF_00616">
    <property type="entry name" value="Ureidogly_lyase"/>
    <property type="match status" value="1"/>
</dbReference>
<dbReference type="InterPro" id="IPR011051">
    <property type="entry name" value="RmlC_Cupin_sf"/>
</dbReference>
<dbReference type="InterPro" id="IPR047233">
    <property type="entry name" value="UAH_cupin"/>
</dbReference>
<dbReference type="InterPro" id="IPR007247">
    <property type="entry name" value="Ureidogly_lyase"/>
</dbReference>
<dbReference type="InterPro" id="IPR023525">
    <property type="entry name" value="Ureidogly_lyase_bac"/>
</dbReference>
<dbReference type="InterPro" id="IPR024060">
    <property type="entry name" value="Ureidoglycolate_lyase_dom_sf"/>
</dbReference>
<dbReference type="NCBIfam" id="NF002953">
    <property type="entry name" value="PRK03606.2-4"/>
    <property type="match status" value="1"/>
</dbReference>
<dbReference type="NCBIfam" id="NF009932">
    <property type="entry name" value="PRK13395.1"/>
    <property type="match status" value="1"/>
</dbReference>
<dbReference type="PANTHER" id="PTHR21221">
    <property type="entry name" value="UREIDOGLYCOLATE HYDROLASE"/>
    <property type="match status" value="1"/>
</dbReference>
<dbReference type="PANTHER" id="PTHR21221:SF1">
    <property type="entry name" value="UREIDOGLYCOLATE LYASE"/>
    <property type="match status" value="1"/>
</dbReference>
<dbReference type="Pfam" id="PF04115">
    <property type="entry name" value="Ureidogly_lyase"/>
    <property type="match status" value="1"/>
</dbReference>
<dbReference type="PIRSF" id="PIRSF017306">
    <property type="entry name" value="Ureidogly_hydro"/>
    <property type="match status" value="1"/>
</dbReference>
<dbReference type="SUPFAM" id="SSF51182">
    <property type="entry name" value="RmlC-like cupins"/>
    <property type="match status" value="1"/>
</dbReference>
<reference key="1">
    <citation type="journal article" date="2002" name="Proc. Natl. Acad. Sci. U.S.A.">
        <title>The genome sequence of the facultative intracellular pathogen Brucella melitensis.</title>
        <authorList>
            <person name="DelVecchio V.G."/>
            <person name="Kapatral V."/>
            <person name="Redkar R.J."/>
            <person name="Patra G."/>
            <person name="Mujer C."/>
            <person name="Los T."/>
            <person name="Ivanova N."/>
            <person name="Anderson I."/>
            <person name="Bhattacharyya A."/>
            <person name="Lykidis A."/>
            <person name="Reznik G."/>
            <person name="Jablonski L."/>
            <person name="Larsen N."/>
            <person name="D'Souza M."/>
            <person name="Bernal A."/>
            <person name="Mazur M."/>
            <person name="Goltsman E."/>
            <person name="Selkov E."/>
            <person name="Elzer P.H."/>
            <person name="Hagius S."/>
            <person name="O'Callaghan D."/>
            <person name="Letesson J.-J."/>
            <person name="Haselkorn R."/>
            <person name="Kyrpides N.C."/>
            <person name="Overbeek R."/>
        </authorList>
    </citation>
    <scope>NUCLEOTIDE SEQUENCE [LARGE SCALE GENOMIC DNA]</scope>
    <source>
        <strain>ATCC 23456 / CCUG 17765 / NCTC 10094 / 16M</strain>
    </source>
</reference>
<keyword id="KW-0456">Lyase</keyword>
<keyword id="KW-0659">Purine metabolism</keyword>
<sequence>MQIETLTVEPLTKEAFAPFGDVIEVEGAQLRLINNGTTERYHDLARVEAAGTQTRALINIFRGQSFAAPIDIMMMERHPFGSQAFIPLNGRPFLVVVAEDAGAGPARPRAFLARGDQGVNYLRNIWHHPLLALEQKSDFLVVDRAGREDNLEEYFFSDYAYRIETTQTA</sequence>